<accession>Q8HVW3</accession>
<proteinExistence type="inferred from homology"/>
<geneLocation type="chloroplast"/>
<protein>
    <recommendedName>
        <fullName evidence="1">NAD(P)H-quinone oxidoreductase subunit I, chloroplastic</fullName>
        <ecNumber evidence="1">7.1.1.-</ecNumber>
    </recommendedName>
    <alternativeName>
        <fullName evidence="1">NAD(P)H dehydrogenase subunit I</fullName>
        <shortName evidence="1">NDH subunit I</shortName>
    </alternativeName>
    <alternativeName>
        <fullName evidence="1">NADH-plastoquinone oxidoreductase subunit I</fullName>
    </alternativeName>
</protein>
<name>NDHI_ACAAU</name>
<reference key="1">
    <citation type="submission" date="2003-01" db="EMBL/GenBank/DDBJ databases">
        <title>Chloroplast DNA phylogeny of tribe Heliantheae (Asteraceae).</title>
        <authorList>
            <person name="Panero J.L."/>
            <person name="Baldwin B.G."/>
            <person name="Schilling E.E."/>
            <person name="Clevinger J.A."/>
        </authorList>
    </citation>
    <scope>NUCLEOTIDE SEQUENCE [GENOMIC DNA]</scope>
</reference>
<feature type="chain" id="PRO_0000250752" description="NAD(P)H-quinone oxidoreductase subunit I, chloroplastic">
    <location>
        <begin position="1"/>
        <end position="166"/>
    </location>
</feature>
<feature type="domain" description="4Fe-4S ferredoxin-type 1" evidence="1">
    <location>
        <begin position="55"/>
        <end position="84"/>
    </location>
</feature>
<feature type="domain" description="4Fe-4S ferredoxin-type 2" evidence="1">
    <location>
        <begin position="95"/>
        <end position="124"/>
    </location>
</feature>
<feature type="binding site" evidence="1">
    <location>
        <position position="64"/>
    </location>
    <ligand>
        <name>[4Fe-4S] cluster</name>
        <dbReference type="ChEBI" id="CHEBI:49883"/>
        <label>1</label>
    </ligand>
</feature>
<feature type="binding site" evidence="1">
    <location>
        <position position="67"/>
    </location>
    <ligand>
        <name>[4Fe-4S] cluster</name>
        <dbReference type="ChEBI" id="CHEBI:49883"/>
        <label>1</label>
    </ligand>
</feature>
<feature type="binding site" evidence="1">
    <location>
        <position position="70"/>
    </location>
    <ligand>
        <name>[4Fe-4S] cluster</name>
        <dbReference type="ChEBI" id="CHEBI:49883"/>
        <label>1</label>
    </ligand>
</feature>
<feature type="binding site" evidence="1">
    <location>
        <position position="74"/>
    </location>
    <ligand>
        <name>[4Fe-4S] cluster</name>
        <dbReference type="ChEBI" id="CHEBI:49883"/>
        <label>2</label>
    </ligand>
</feature>
<feature type="binding site" evidence="1">
    <location>
        <position position="104"/>
    </location>
    <ligand>
        <name>[4Fe-4S] cluster</name>
        <dbReference type="ChEBI" id="CHEBI:49883"/>
        <label>2</label>
    </ligand>
</feature>
<feature type="binding site" evidence="1">
    <location>
        <position position="107"/>
    </location>
    <ligand>
        <name>[4Fe-4S] cluster</name>
        <dbReference type="ChEBI" id="CHEBI:49883"/>
        <label>2</label>
    </ligand>
</feature>
<feature type="binding site" evidence="1">
    <location>
        <position position="110"/>
    </location>
    <ligand>
        <name>[4Fe-4S] cluster</name>
        <dbReference type="ChEBI" id="CHEBI:49883"/>
        <label>2</label>
    </ligand>
</feature>
<feature type="binding site" evidence="1">
    <location>
        <position position="114"/>
    </location>
    <ligand>
        <name>[4Fe-4S] cluster</name>
        <dbReference type="ChEBI" id="CHEBI:49883"/>
        <label>1</label>
    </ligand>
</feature>
<keyword id="KW-0004">4Fe-4S</keyword>
<keyword id="KW-0150">Chloroplast</keyword>
<keyword id="KW-0408">Iron</keyword>
<keyword id="KW-0411">Iron-sulfur</keyword>
<keyword id="KW-0472">Membrane</keyword>
<keyword id="KW-0479">Metal-binding</keyword>
<keyword id="KW-0520">NAD</keyword>
<keyword id="KW-0521">NADP</keyword>
<keyword id="KW-0934">Plastid</keyword>
<keyword id="KW-0618">Plastoquinone</keyword>
<keyword id="KW-0874">Quinone</keyword>
<keyword id="KW-0677">Repeat</keyword>
<keyword id="KW-0793">Thylakoid</keyword>
<keyword id="KW-1278">Translocase</keyword>
<evidence type="ECO:0000255" key="1">
    <source>
        <dbReference type="HAMAP-Rule" id="MF_01351"/>
    </source>
</evidence>
<comment type="function">
    <text evidence="1">NDH shuttles electrons from NAD(P)H:plastoquinone, via FMN and iron-sulfur (Fe-S) centers, to quinones in the photosynthetic chain and possibly in a chloroplast respiratory chain. The immediate electron acceptor for the enzyme in this species is believed to be plastoquinone. Couples the redox reaction to proton translocation, and thus conserves the redox energy in a proton gradient.</text>
</comment>
<comment type="catalytic activity">
    <reaction evidence="1">
        <text>a plastoquinone + NADH + (n+1) H(+)(in) = a plastoquinol + NAD(+) + n H(+)(out)</text>
        <dbReference type="Rhea" id="RHEA:42608"/>
        <dbReference type="Rhea" id="RHEA-COMP:9561"/>
        <dbReference type="Rhea" id="RHEA-COMP:9562"/>
        <dbReference type="ChEBI" id="CHEBI:15378"/>
        <dbReference type="ChEBI" id="CHEBI:17757"/>
        <dbReference type="ChEBI" id="CHEBI:57540"/>
        <dbReference type="ChEBI" id="CHEBI:57945"/>
        <dbReference type="ChEBI" id="CHEBI:62192"/>
    </reaction>
</comment>
<comment type="catalytic activity">
    <reaction evidence="1">
        <text>a plastoquinone + NADPH + (n+1) H(+)(in) = a plastoquinol + NADP(+) + n H(+)(out)</text>
        <dbReference type="Rhea" id="RHEA:42612"/>
        <dbReference type="Rhea" id="RHEA-COMP:9561"/>
        <dbReference type="Rhea" id="RHEA-COMP:9562"/>
        <dbReference type="ChEBI" id="CHEBI:15378"/>
        <dbReference type="ChEBI" id="CHEBI:17757"/>
        <dbReference type="ChEBI" id="CHEBI:57783"/>
        <dbReference type="ChEBI" id="CHEBI:58349"/>
        <dbReference type="ChEBI" id="CHEBI:62192"/>
    </reaction>
</comment>
<comment type="cofactor">
    <cofactor evidence="1">
        <name>[4Fe-4S] cluster</name>
        <dbReference type="ChEBI" id="CHEBI:49883"/>
    </cofactor>
    <text evidence="1">Binds 2 [4Fe-4S] clusters per subunit.</text>
</comment>
<comment type="subunit">
    <text evidence="1">NDH is composed of at least 16 different subunits, 5 of which are encoded in the nucleus.</text>
</comment>
<comment type="subcellular location">
    <subcellularLocation>
        <location evidence="1">Plastid</location>
        <location evidence="1">Chloroplast thylakoid membrane</location>
        <topology evidence="1">Peripheral membrane protein</topology>
    </subcellularLocation>
</comment>
<comment type="similarity">
    <text evidence="1">Belongs to the complex I 23 kDa subunit family.</text>
</comment>
<sequence length="166" mass="19433">MFPMVTEFMNYGQQTVRAARYIGQGFTITLSHANRLPVTIQYPYEKLITSERFRGRIHFEFDKCIACEVCVRVCPIDLPVVDWKLETDIRKKRLLNYSIDFGICIFCGNCVEYCPTNCLSMTEEYELSTYDRHELNYNQIALGRLPMSIIDDYTIRTILNLPETKT</sequence>
<gene>
    <name evidence="1" type="primary">ndhI</name>
</gene>
<organism>
    <name type="scientific">Acanthospermum australe</name>
    <name type="common">Paraguayan starburr</name>
    <name type="synonym">Melampodium australe</name>
    <dbReference type="NCBI Taxonomy" id="185140"/>
    <lineage>
        <taxon>Eukaryota</taxon>
        <taxon>Viridiplantae</taxon>
        <taxon>Streptophyta</taxon>
        <taxon>Embryophyta</taxon>
        <taxon>Tracheophyta</taxon>
        <taxon>Spermatophyta</taxon>
        <taxon>Magnoliopsida</taxon>
        <taxon>eudicotyledons</taxon>
        <taxon>Gunneridae</taxon>
        <taxon>Pentapetalae</taxon>
        <taxon>asterids</taxon>
        <taxon>campanulids</taxon>
        <taxon>Asterales</taxon>
        <taxon>Asteraceae</taxon>
        <taxon>Asteroideae</taxon>
        <taxon>Heliantheae alliance</taxon>
        <taxon>Millerieae</taxon>
        <taxon>Acanthospermum</taxon>
    </lineage>
</organism>
<dbReference type="EC" id="7.1.1.-" evidence="1"/>
<dbReference type="EMBL" id="AF383749">
    <property type="protein sequence ID" value="AAN61691.1"/>
    <property type="molecule type" value="Genomic_DNA"/>
</dbReference>
<dbReference type="SMR" id="Q8HVW3"/>
<dbReference type="GO" id="GO:0009535">
    <property type="term" value="C:chloroplast thylakoid membrane"/>
    <property type="evidence" value="ECO:0007669"/>
    <property type="project" value="UniProtKB-SubCell"/>
</dbReference>
<dbReference type="GO" id="GO:0051539">
    <property type="term" value="F:4 iron, 4 sulfur cluster binding"/>
    <property type="evidence" value="ECO:0007669"/>
    <property type="project" value="UniProtKB-KW"/>
</dbReference>
<dbReference type="GO" id="GO:0005506">
    <property type="term" value="F:iron ion binding"/>
    <property type="evidence" value="ECO:0007669"/>
    <property type="project" value="UniProtKB-UniRule"/>
</dbReference>
<dbReference type="GO" id="GO:0008137">
    <property type="term" value="F:NADH dehydrogenase (ubiquinone) activity"/>
    <property type="evidence" value="ECO:0007669"/>
    <property type="project" value="InterPro"/>
</dbReference>
<dbReference type="GO" id="GO:0048038">
    <property type="term" value="F:quinone binding"/>
    <property type="evidence" value="ECO:0007669"/>
    <property type="project" value="UniProtKB-KW"/>
</dbReference>
<dbReference type="GO" id="GO:0019684">
    <property type="term" value="P:photosynthesis, light reaction"/>
    <property type="evidence" value="ECO:0007669"/>
    <property type="project" value="UniProtKB-UniRule"/>
</dbReference>
<dbReference type="FunFam" id="3.30.70.3270:FF:000006">
    <property type="entry name" value="NAD(P)H-quinone oxidoreductase subunit I, chloroplastic"/>
    <property type="match status" value="1"/>
</dbReference>
<dbReference type="Gene3D" id="3.30.70.3270">
    <property type="match status" value="1"/>
</dbReference>
<dbReference type="HAMAP" id="MF_01351">
    <property type="entry name" value="NDH1_NuoI"/>
    <property type="match status" value="1"/>
</dbReference>
<dbReference type="InterPro" id="IPR017896">
    <property type="entry name" value="4Fe4S_Fe-S-bd"/>
</dbReference>
<dbReference type="InterPro" id="IPR017900">
    <property type="entry name" value="4Fe4S_Fe_S_CS"/>
</dbReference>
<dbReference type="InterPro" id="IPR010226">
    <property type="entry name" value="NADH_quinone_OxRdtase_chainI"/>
</dbReference>
<dbReference type="InterPro" id="IPR004497">
    <property type="entry name" value="NDHI"/>
</dbReference>
<dbReference type="NCBIfam" id="TIGR00403">
    <property type="entry name" value="ndhI"/>
    <property type="match status" value="1"/>
</dbReference>
<dbReference type="NCBIfam" id="TIGR01971">
    <property type="entry name" value="NuoI"/>
    <property type="match status" value="1"/>
</dbReference>
<dbReference type="NCBIfam" id="NF004537">
    <property type="entry name" value="PRK05888.1-3"/>
    <property type="match status" value="1"/>
</dbReference>
<dbReference type="PANTHER" id="PTHR47275">
    <property type="entry name" value="NAD(P)H-QUINONE OXIDOREDUCTASE SUBUNIT I, CHLOROPLASTIC"/>
    <property type="match status" value="1"/>
</dbReference>
<dbReference type="PANTHER" id="PTHR47275:SF1">
    <property type="entry name" value="NAD(P)H-QUINONE OXIDOREDUCTASE SUBUNIT I, CHLOROPLASTIC"/>
    <property type="match status" value="1"/>
</dbReference>
<dbReference type="Pfam" id="PF00037">
    <property type="entry name" value="Fer4"/>
    <property type="match status" value="2"/>
</dbReference>
<dbReference type="SUPFAM" id="SSF54862">
    <property type="entry name" value="4Fe-4S ferredoxins"/>
    <property type="match status" value="1"/>
</dbReference>
<dbReference type="PROSITE" id="PS00198">
    <property type="entry name" value="4FE4S_FER_1"/>
    <property type="match status" value="2"/>
</dbReference>
<dbReference type="PROSITE" id="PS51379">
    <property type="entry name" value="4FE4S_FER_2"/>
    <property type="match status" value="2"/>
</dbReference>